<organism>
    <name type="scientific">Xylella fastidiosa (strain M12)</name>
    <dbReference type="NCBI Taxonomy" id="405440"/>
    <lineage>
        <taxon>Bacteria</taxon>
        <taxon>Pseudomonadati</taxon>
        <taxon>Pseudomonadota</taxon>
        <taxon>Gammaproteobacteria</taxon>
        <taxon>Lysobacterales</taxon>
        <taxon>Lysobacteraceae</taxon>
        <taxon>Xylella</taxon>
    </lineage>
</organism>
<name>BIOB_XYLFM</name>
<feature type="chain" id="PRO_0000381717" description="Biotin synthase">
    <location>
        <begin position="1"/>
        <end position="341"/>
    </location>
</feature>
<feature type="domain" description="Radical SAM core" evidence="2">
    <location>
        <begin position="40"/>
        <end position="267"/>
    </location>
</feature>
<feature type="binding site" evidence="1">
    <location>
        <position position="55"/>
    </location>
    <ligand>
        <name>[4Fe-4S] cluster</name>
        <dbReference type="ChEBI" id="CHEBI:49883"/>
        <note>4Fe-4S-S-AdoMet</note>
    </ligand>
</feature>
<feature type="binding site" evidence="1">
    <location>
        <position position="59"/>
    </location>
    <ligand>
        <name>[4Fe-4S] cluster</name>
        <dbReference type="ChEBI" id="CHEBI:49883"/>
        <note>4Fe-4S-S-AdoMet</note>
    </ligand>
</feature>
<feature type="binding site" evidence="1">
    <location>
        <position position="62"/>
    </location>
    <ligand>
        <name>[4Fe-4S] cluster</name>
        <dbReference type="ChEBI" id="CHEBI:49883"/>
        <note>4Fe-4S-S-AdoMet</note>
    </ligand>
</feature>
<feature type="binding site" evidence="1">
    <location>
        <position position="99"/>
    </location>
    <ligand>
        <name>[2Fe-2S] cluster</name>
        <dbReference type="ChEBI" id="CHEBI:190135"/>
    </ligand>
</feature>
<feature type="binding site" evidence="1">
    <location>
        <position position="130"/>
    </location>
    <ligand>
        <name>[2Fe-2S] cluster</name>
        <dbReference type="ChEBI" id="CHEBI:190135"/>
    </ligand>
</feature>
<feature type="binding site" evidence="1">
    <location>
        <position position="190"/>
    </location>
    <ligand>
        <name>[2Fe-2S] cluster</name>
        <dbReference type="ChEBI" id="CHEBI:190135"/>
    </ligand>
</feature>
<feature type="binding site" evidence="1">
    <location>
        <position position="262"/>
    </location>
    <ligand>
        <name>[2Fe-2S] cluster</name>
        <dbReference type="ChEBI" id="CHEBI:190135"/>
    </ligand>
</feature>
<keyword id="KW-0001">2Fe-2S</keyword>
<keyword id="KW-0004">4Fe-4S</keyword>
<keyword id="KW-0093">Biotin biosynthesis</keyword>
<keyword id="KW-0408">Iron</keyword>
<keyword id="KW-0411">Iron-sulfur</keyword>
<keyword id="KW-0479">Metal-binding</keyword>
<keyword id="KW-0949">S-adenosyl-L-methionine</keyword>
<keyword id="KW-0808">Transferase</keyword>
<protein>
    <recommendedName>
        <fullName evidence="1">Biotin synthase</fullName>
        <ecNumber evidence="1">2.8.1.6</ecNumber>
    </recommendedName>
</protein>
<sequence length="341" mass="37676">MSSVIRYDWTAEELHALFDLSLPELLYRAASVHRQHFDPAEIQVSTLLSVKTGGCPEDCSYCPQAQRYDTGVTAQKLMDVDAVVAKARQAKLAGASRFCMGAAWRSPKDRDIPKIASMIREVKALGLETCATLGMLNTCQAQALKDAGLDYYNHNVDTSPDFYDSVIHTRQYQDRLDTLAHVRDVGLKTCCGGIVGMGETRQHRVGLLLTLATLPAHPDSVPVNLLVQVAGTPLHGTQTLDPFEFVRMIAVARITMPRSMVRLSAGRESMSDELQLLCFMAGANSIFYGEKLLTTANPETERDQALFQRLGLRPMHLMENVSNQDQHHGNVHADIACKHVV</sequence>
<dbReference type="EC" id="2.8.1.6" evidence="1"/>
<dbReference type="EMBL" id="CP000941">
    <property type="protein sequence ID" value="ACA11097.1"/>
    <property type="molecule type" value="Genomic_DNA"/>
</dbReference>
<dbReference type="RefSeq" id="WP_004085057.1">
    <property type="nucleotide sequence ID" value="NC_010513.1"/>
</dbReference>
<dbReference type="SMR" id="B0U2A0"/>
<dbReference type="KEGG" id="xfm:Xfasm12_0050"/>
<dbReference type="HOGENOM" id="CLU_033172_1_2_6"/>
<dbReference type="UniPathway" id="UPA00078">
    <property type="reaction ID" value="UER00162"/>
</dbReference>
<dbReference type="GO" id="GO:0051537">
    <property type="term" value="F:2 iron, 2 sulfur cluster binding"/>
    <property type="evidence" value="ECO:0007669"/>
    <property type="project" value="UniProtKB-KW"/>
</dbReference>
<dbReference type="GO" id="GO:0051539">
    <property type="term" value="F:4 iron, 4 sulfur cluster binding"/>
    <property type="evidence" value="ECO:0007669"/>
    <property type="project" value="UniProtKB-KW"/>
</dbReference>
<dbReference type="GO" id="GO:0004076">
    <property type="term" value="F:biotin synthase activity"/>
    <property type="evidence" value="ECO:0007669"/>
    <property type="project" value="UniProtKB-UniRule"/>
</dbReference>
<dbReference type="GO" id="GO:0005506">
    <property type="term" value="F:iron ion binding"/>
    <property type="evidence" value="ECO:0007669"/>
    <property type="project" value="UniProtKB-UniRule"/>
</dbReference>
<dbReference type="GO" id="GO:0009102">
    <property type="term" value="P:biotin biosynthetic process"/>
    <property type="evidence" value="ECO:0007669"/>
    <property type="project" value="UniProtKB-UniRule"/>
</dbReference>
<dbReference type="CDD" id="cd01335">
    <property type="entry name" value="Radical_SAM"/>
    <property type="match status" value="1"/>
</dbReference>
<dbReference type="FunFam" id="3.20.20.70:FF:000011">
    <property type="entry name" value="Biotin synthase"/>
    <property type="match status" value="1"/>
</dbReference>
<dbReference type="Gene3D" id="3.20.20.70">
    <property type="entry name" value="Aldolase class I"/>
    <property type="match status" value="1"/>
</dbReference>
<dbReference type="HAMAP" id="MF_01694">
    <property type="entry name" value="BioB"/>
    <property type="match status" value="1"/>
</dbReference>
<dbReference type="InterPro" id="IPR013785">
    <property type="entry name" value="Aldolase_TIM"/>
</dbReference>
<dbReference type="InterPro" id="IPR010722">
    <property type="entry name" value="BATS_dom"/>
</dbReference>
<dbReference type="InterPro" id="IPR002684">
    <property type="entry name" value="Biotin_synth/BioAB"/>
</dbReference>
<dbReference type="InterPro" id="IPR024177">
    <property type="entry name" value="Biotin_synthase"/>
</dbReference>
<dbReference type="InterPro" id="IPR006638">
    <property type="entry name" value="Elp3/MiaA/NifB-like_rSAM"/>
</dbReference>
<dbReference type="InterPro" id="IPR007197">
    <property type="entry name" value="rSAM"/>
</dbReference>
<dbReference type="NCBIfam" id="TIGR00433">
    <property type="entry name" value="bioB"/>
    <property type="match status" value="1"/>
</dbReference>
<dbReference type="PANTHER" id="PTHR22976">
    <property type="entry name" value="BIOTIN SYNTHASE"/>
    <property type="match status" value="1"/>
</dbReference>
<dbReference type="PANTHER" id="PTHR22976:SF2">
    <property type="entry name" value="BIOTIN SYNTHASE, MITOCHONDRIAL"/>
    <property type="match status" value="1"/>
</dbReference>
<dbReference type="Pfam" id="PF06968">
    <property type="entry name" value="BATS"/>
    <property type="match status" value="1"/>
</dbReference>
<dbReference type="Pfam" id="PF04055">
    <property type="entry name" value="Radical_SAM"/>
    <property type="match status" value="1"/>
</dbReference>
<dbReference type="PIRSF" id="PIRSF001619">
    <property type="entry name" value="Biotin_synth"/>
    <property type="match status" value="1"/>
</dbReference>
<dbReference type="SFLD" id="SFLDF00272">
    <property type="entry name" value="biotin_synthase"/>
    <property type="match status" value="1"/>
</dbReference>
<dbReference type="SFLD" id="SFLDS00029">
    <property type="entry name" value="Radical_SAM"/>
    <property type="match status" value="1"/>
</dbReference>
<dbReference type="SMART" id="SM00876">
    <property type="entry name" value="BATS"/>
    <property type="match status" value="1"/>
</dbReference>
<dbReference type="SMART" id="SM00729">
    <property type="entry name" value="Elp3"/>
    <property type="match status" value="1"/>
</dbReference>
<dbReference type="SUPFAM" id="SSF102114">
    <property type="entry name" value="Radical SAM enzymes"/>
    <property type="match status" value="1"/>
</dbReference>
<dbReference type="PROSITE" id="PS51918">
    <property type="entry name" value="RADICAL_SAM"/>
    <property type="match status" value="1"/>
</dbReference>
<accession>B0U2A0</accession>
<gene>
    <name evidence="1" type="primary">bioB</name>
    <name type="ordered locus">Xfasm12_0050</name>
</gene>
<reference key="1">
    <citation type="journal article" date="2010" name="J. Bacteriol.">
        <title>Whole genome sequences of two Xylella fastidiosa strains (M12 and M23) causing almond leaf scorch disease in California.</title>
        <authorList>
            <person name="Chen J."/>
            <person name="Xie G."/>
            <person name="Han S."/>
            <person name="Chertkov O."/>
            <person name="Sims D."/>
            <person name="Civerolo E.L."/>
        </authorList>
    </citation>
    <scope>NUCLEOTIDE SEQUENCE [LARGE SCALE GENOMIC DNA]</scope>
    <source>
        <strain>M12</strain>
    </source>
</reference>
<comment type="function">
    <text evidence="1">Catalyzes the conversion of dethiobiotin (DTB) to biotin by the insertion of a sulfur atom into dethiobiotin via a radical-based mechanism.</text>
</comment>
<comment type="catalytic activity">
    <reaction evidence="1">
        <text>(4R,5S)-dethiobiotin + (sulfur carrier)-SH + 2 reduced [2Fe-2S]-[ferredoxin] + 2 S-adenosyl-L-methionine = (sulfur carrier)-H + biotin + 2 5'-deoxyadenosine + 2 L-methionine + 2 oxidized [2Fe-2S]-[ferredoxin]</text>
        <dbReference type="Rhea" id="RHEA:22060"/>
        <dbReference type="Rhea" id="RHEA-COMP:10000"/>
        <dbReference type="Rhea" id="RHEA-COMP:10001"/>
        <dbReference type="Rhea" id="RHEA-COMP:14737"/>
        <dbReference type="Rhea" id="RHEA-COMP:14739"/>
        <dbReference type="ChEBI" id="CHEBI:17319"/>
        <dbReference type="ChEBI" id="CHEBI:29917"/>
        <dbReference type="ChEBI" id="CHEBI:33737"/>
        <dbReference type="ChEBI" id="CHEBI:33738"/>
        <dbReference type="ChEBI" id="CHEBI:57586"/>
        <dbReference type="ChEBI" id="CHEBI:57844"/>
        <dbReference type="ChEBI" id="CHEBI:59789"/>
        <dbReference type="ChEBI" id="CHEBI:64428"/>
        <dbReference type="ChEBI" id="CHEBI:149473"/>
        <dbReference type="EC" id="2.8.1.6"/>
    </reaction>
</comment>
<comment type="cofactor">
    <cofactor evidence="1">
        <name>[4Fe-4S] cluster</name>
        <dbReference type="ChEBI" id="CHEBI:49883"/>
    </cofactor>
    <text evidence="1">Binds 1 [4Fe-4S] cluster. The cluster is coordinated with 3 cysteines and an exchangeable S-adenosyl-L-methionine.</text>
</comment>
<comment type="cofactor">
    <cofactor evidence="1">
        <name>[2Fe-2S] cluster</name>
        <dbReference type="ChEBI" id="CHEBI:190135"/>
    </cofactor>
    <text evidence="1">Binds 1 [2Fe-2S] cluster. The cluster is coordinated with 3 cysteines and 1 arginine.</text>
</comment>
<comment type="pathway">
    <text evidence="1">Cofactor biosynthesis; biotin biosynthesis; biotin from 7,8-diaminononanoate: step 2/2.</text>
</comment>
<comment type="subunit">
    <text evidence="1">Homodimer.</text>
</comment>
<comment type="similarity">
    <text evidence="1">Belongs to the radical SAM superfamily. Biotin synthase family.</text>
</comment>
<evidence type="ECO:0000255" key="1">
    <source>
        <dbReference type="HAMAP-Rule" id="MF_01694"/>
    </source>
</evidence>
<evidence type="ECO:0000255" key="2">
    <source>
        <dbReference type="PROSITE-ProRule" id="PRU01266"/>
    </source>
</evidence>
<proteinExistence type="inferred from homology"/>